<organism>
    <name type="scientific">Listeria monocytogenes serotype 4b (strain F2365)</name>
    <dbReference type="NCBI Taxonomy" id="265669"/>
    <lineage>
        <taxon>Bacteria</taxon>
        <taxon>Bacillati</taxon>
        <taxon>Bacillota</taxon>
        <taxon>Bacilli</taxon>
        <taxon>Bacillales</taxon>
        <taxon>Listeriaceae</taxon>
        <taxon>Listeria</taxon>
    </lineage>
</organism>
<accession>Q71XX2</accession>
<protein>
    <recommendedName>
        <fullName evidence="1">Ribosomal RNA small subunit methyltransferase H</fullName>
        <ecNumber evidence="1">2.1.1.199</ecNumber>
    </recommendedName>
    <alternativeName>
        <fullName evidence="1">16S rRNA m(4)C1402 methyltransferase</fullName>
    </alternativeName>
    <alternativeName>
        <fullName evidence="1">rRNA (cytosine-N(4)-)-methyltransferase RsmH</fullName>
    </alternativeName>
</protein>
<evidence type="ECO:0000255" key="1">
    <source>
        <dbReference type="HAMAP-Rule" id="MF_01007"/>
    </source>
</evidence>
<gene>
    <name evidence="1" type="primary">rsmH</name>
    <name type="synonym">mraW</name>
    <name type="ordered locus">LMOf2365_2073</name>
</gene>
<dbReference type="EC" id="2.1.1.199" evidence="1"/>
<dbReference type="EMBL" id="AE017262">
    <property type="protein sequence ID" value="AAT04843.1"/>
    <property type="molecule type" value="Genomic_DNA"/>
</dbReference>
<dbReference type="RefSeq" id="WP_003728330.1">
    <property type="nucleotide sequence ID" value="NC_002973.6"/>
</dbReference>
<dbReference type="SMR" id="Q71XX2"/>
<dbReference type="KEGG" id="lmf:LMOf2365_2073"/>
<dbReference type="HOGENOM" id="CLU_038422_2_0_9"/>
<dbReference type="GO" id="GO:0005737">
    <property type="term" value="C:cytoplasm"/>
    <property type="evidence" value="ECO:0007669"/>
    <property type="project" value="UniProtKB-SubCell"/>
</dbReference>
<dbReference type="GO" id="GO:0071424">
    <property type="term" value="F:rRNA (cytosine-N4-)-methyltransferase activity"/>
    <property type="evidence" value="ECO:0007669"/>
    <property type="project" value="UniProtKB-UniRule"/>
</dbReference>
<dbReference type="GO" id="GO:0070475">
    <property type="term" value="P:rRNA base methylation"/>
    <property type="evidence" value="ECO:0007669"/>
    <property type="project" value="UniProtKB-UniRule"/>
</dbReference>
<dbReference type="FunFam" id="1.10.150.170:FF:000001">
    <property type="entry name" value="Ribosomal RNA small subunit methyltransferase H"/>
    <property type="match status" value="1"/>
</dbReference>
<dbReference type="Gene3D" id="1.10.150.170">
    <property type="entry name" value="Putative methyltransferase TM0872, insert domain"/>
    <property type="match status" value="1"/>
</dbReference>
<dbReference type="Gene3D" id="3.40.50.150">
    <property type="entry name" value="Vaccinia Virus protein VP39"/>
    <property type="match status" value="1"/>
</dbReference>
<dbReference type="HAMAP" id="MF_01007">
    <property type="entry name" value="16SrRNA_methyltr_H"/>
    <property type="match status" value="1"/>
</dbReference>
<dbReference type="InterPro" id="IPR002903">
    <property type="entry name" value="RsmH"/>
</dbReference>
<dbReference type="InterPro" id="IPR023397">
    <property type="entry name" value="SAM-dep_MeTrfase_MraW_recog"/>
</dbReference>
<dbReference type="InterPro" id="IPR029063">
    <property type="entry name" value="SAM-dependent_MTases_sf"/>
</dbReference>
<dbReference type="NCBIfam" id="TIGR00006">
    <property type="entry name" value="16S rRNA (cytosine(1402)-N(4))-methyltransferase RsmH"/>
    <property type="match status" value="1"/>
</dbReference>
<dbReference type="PANTHER" id="PTHR11265:SF0">
    <property type="entry name" value="12S RRNA N4-METHYLCYTIDINE METHYLTRANSFERASE"/>
    <property type="match status" value="1"/>
</dbReference>
<dbReference type="PANTHER" id="PTHR11265">
    <property type="entry name" value="S-ADENOSYL-METHYLTRANSFERASE MRAW"/>
    <property type="match status" value="1"/>
</dbReference>
<dbReference type="Pfam" id="PF01795">
    <property type="entry name" value="Methyltransf_5"/>
    <property type="match status" value="1"/>
</dbReference>
<dbReference type="PIRSF" id="PIRSF004486">
    <property type="entry name" value="MraW"/>
    <property type="match status" value="1"/>
</dbReference>
<dbReference type="SUPFAM" id="SSF81799">
    <property type="entry name" value="Putative methyltransferase TM0872, insert domain"/>
    <property type="match status" value="1"/>
</dbReference>
<dbReference type="SUPFAM" id="SSF53335">
    <property type="entry name" value="S-adenosyl-L-methionine-dependent methyltransferases"/>
    <property type="match status" value="1"/>
</dbReference>
<name>RSMH_LISMF</name>
<keyword id="KW-0963">Cytoplasm</keyword>
<keyword id="KW-0489">Methyltransferase</keyword>
<keyword id="KW-0698">rRNA processing</keyword>
<keyword id="KW-0949">S-adenosyl-L-methionine</keyword>
<keyword id="KW-0808">Transferase</keyword>
<proteinExistence type="inferred from homology"/>
<sequence>MFKHETVLLHETVDMLEVKPDGIYVDATLGGAGHSEYLLNKLNEKGHLFAFDQDQTAIDNAKIKLADYSDKVTFIKANFRDMKEALNERGIEAVDGILYDLGVSSPQLDERERGFSYHQDAALDMRMDQEQELTAKIVVNEWSYQDLIRIFFQYGEEKFSKQIAREIERRREVKPIETTGELVDIIKTAIPAPARRKGGHPGKRTFQAIRIAVNDELGAVEDSLEKALTLLKPGGRISVITFHSLEDRITKQLFQEATKGPDLPPGLPVIPDEYKPDFKLATRKPIVPSEEELEQNNRARSAKLRVIEKIIK</sequence>
<comment type="function">
    <text evidence="1">Specifically methylates the N4 position of cytidine in position 1402 (C1402) of 16S rRNA.</text>
</comment>
<comment type="catalytic activity">
    <reaction evidence="1">
        <text>cytidine(1402) in 16S rRNA + S-adenosyl-L-methionine = N(4)-methylcytidine(1402) in 16S rRNA + S-adenosyl-L-homocysteine + H(+)</text>
        <dbReference type="Rhea" id="RHEA:42928"/>
        <dbReference type="Rhea" id="RHEA-COMP:10286"/>
        <dbReference type="Rhea" id="RHEA-COMP:10287"/>
        <dbReference type="ChEBI" id="CHEBI:15378"/>
        <dbReference type="ChEBI" id="CHEBI:57856"/>
        <dbReference type="ChEBI" id="CHEBI:59789"/>
        <dbReference type="ChEBI" id="CHEBI:74506"/>
        <dbReference type="ChEBI" id="CHEBI:82748"/>
        <dbReference type="EC" id="2.1.1.199"/>
    </reaction>
</comment>
<comment type="subcellular location">
    <subcellularLocation>
        <location evidence="1">Cytoplasm</location>
    </subcellularLocation>
</comment>
<comment type="similarity">
    <text evidence="1">Belongs to the methyltransferase superfamily. RsmH family.</text>
</comment>
<reference key="1">
    <citation type="journal article" date="2004" name="Nucleic Acids Res.">
        <title>Whole genome comparisons of serotype 4b and 1/2a strains of the food-borne pathogen Listeria monocytogenes reveal new insights into the core genome components of this species.</title>
        <authorList>
            <person name="Nelson K.E."/>
            <person name="Fouts D.E."/>
            <person name="Mongodin E.F."/>
            <person name="Ravel J."/>
            <person name="DeBoy R.T."/>
            <person name="Kolonay J.F."/>
            <person name="Rasko D.A."/>
            <person name="Angiuoli S.V."/>
            <person name="Gill S.R."/>
            <person name="Paulsen I.T."/>
            <person name="Peterson J.D."/>
            <person name="White O."/>
            <person name="Nelson W.C."/>
            <person name="Nierman W.C."/>
            <person name="Beanan M.J."/>
            <person name="Brinkac L.M."/>
            <person name="Daugherty S.C."/>
            <person name="Dodson R.J."/>
            <person name="Durkin A.S."/>
            <person name="Madupu R."/>
            <person name="Haft D.H."/>
            <person name="Selengut J."/>
            <person name="Van Aken S.E."/>
            <person name="Khouri H.M."/>
            <person name="Fedorova N."/>
            <person name="Forberger H.A."/>
            <person name="Tran B."/>
            <person name="Kathariou S."/>
            <person name="Wonderling L.D."/>
            <person name="Uhlich G.A."/>
            <person name="Bayles D.O."/>
            <person name="Luchansky J.B."/>
            <person name="Fraser C.M."/>
        </authorList>
    </citation>
    <scope>NUCLEOTIDE SEQUENCE [LARGE SCALE GENOMIC DNA]</scope>
    <source>
        <strain>F2365</strain>
    </source>
</reference>
<feature type="chain" id="PRO_0000108652" description="Ribosomal RNA small subunit methyltransferase H">
    <location>
        <begin position="1"/>
        <end position="312"/>
    </location>
</feature>
<feature type="binding site" evidence="1">
    <location>
        <begin position="32"/>
        <end position="34"/>
    </location>
    <ligand>
        <name>S-adenosyl-L-methionine</name>
        <dbReference type="ChEBI" id="CHEBI:59789"/>
    </ligand>
</feature>
<feature type="binding site" evidence="1">
    <location>
        <position position="52"/>
    </location>
    <ligand>
        <name>S-adenosyl-L-methionine</name>
        <dbReference type="ChEBI" id="CHEBI:59789"/>
    </ligand>
</feature>
<feature type="binding site" evidence="1">
    <location>
        <position position="79"/>
    </location>
    <ligand>
        <name>S-adenosyl-L-methionine</name>
        <dbReference type="ChEBI" id="CHEBI:59789"/>
    </ligand>
</feature>
<feature type="binding site" evidence="1">
    <location>
        <position position="100"/>
    </location>
    <ligand>
        <name>S-adenosyl-L-methionine</name>
        <dbReference type="ChEBI" id="CHEBI:59789"/>
    </ligand>
</feature>
<feature type="binding site" evidence="1">
    <location>
        <position position="107"/>
    </location>
    <ligand>
        <name>S-adenosyl-L-methionine</name>
        <dbReference type="ChEBI" id="CHEBI:59789"/>
    </ligand>
</feature>